<name>CAMP_BOTAT</name>
<keyword id="KW-0044">Antibiotic</keyword>
<keyword id="KW-0929">Antimicrobial</keyword>
<keyword id="KW-0165">Cleavage on pair of basic residues</keyword>
<keyword id="KW-1015">Disulfide bond</keyword>
<keyword id="KW-0472">Membrane</keyword>
<keyword id="KW-0582">Pharmaceutical</keyword>
<keyword id="KW-0964">Secreted</keyword>
<keyword id="KW-0732">Signal</keyword>
<keyword id="KW-1052">Target cell membrane</keyword>
<keyword id="KW-1053">Target membrane</keyword>
<feature type="signal peptide" evidence="3">
    <location>
        <begin position="1"/>
        <end position="22"/>
    </location>
</feature>
<feature type="propeptide" id="PRO_0000432131" evidence="9">
    <location>
        <begin position="23"/>
        <end position="155"/>
    </location>
</feature>
<feature type="peptide" id="PRO_0000432132" description="Batroxicidin" evidence="9">
    <location>
        <begin position="156"/>
        <end position="189"/>
    </location>
</feature>
<feature type="region of interest" description="Disordered" evidence="4">
    <location>
        <begin position="125"/>
        <end position="152"/>
    </location>
</feature>
<feature type="compositionally biased region" description="Acidic residues" evidence="4">
    <location>
        <begin position="125"/>
        <end position="148"/>
    </location>
</feature>
<feature type="disulfide bond" evidence="1">
    <location>
        <begin position="79"/>
        <end position="90"/>
    </location>
</feature>
<feature type="disulfide bond" evidence="1">
    <location>
        <begin position="101"/>
        <end position="118"/>
    </location>
</feature>
<protein>
    <recommendedName>
        <fullName evidence="6 7">Batroxicidin</fullName>
        <shortName evidence="7">BatxC</shortName>
    </recommendedName>
    <alternativeName>
        <fullName evidence="6">Cathelicidin-related antimicrobial peptide</fullName>
        <shortName evidence="6">CRAMP</shortName>
    </alternativeName>
    <alternativeName>
        <fullName evidence="6">Vipericidin</fullName>
    </alternativeName>
</protein>
<accession>U5KJC9</accession>
<proteinExistence type="evidence at transcript level"/>
<sequence length="189" mass="21811">MQGFFWKTWLVVALCGTSSSLAHRPLSYGEALELALSIYNSKAGEESLFRLLEAVPQPEWDPLSEGSQQLNFTIKETVCQVEEERPLEECGFQEDGVVLECTGYYFFGETPPVVVLTCVPVGGVEEEEEDEEEQKAEVEKDEEKEDEEKDRPKRVKRFKKFFKKLKNSVKKRVKKFFRKPRVIGVTFPF</sequence>
<dbReference type="EMBL" id="JX948111">
    <property type="protein sequence ID" value="AGS36140.1"/>
    <property type="molecule type" value="mRNA"/>
</dbReference>
<dbReference type="SMR" id="U5KJC9"/>
<dbReference type="GO" id="GO:0005615">
    <property type="term" value="C:extracellular space"/>
    <property type="evidence" value="ECO:0007669"/>
    <property type="project" value="TreeGrafter"/>
</dbReference>
<dbReference type="GO" id="GO:0016020">
    <property type="term" value="C:membrane"/>
    <property type="evidence" value="ECO:0007669"/>
    <property type="project" value="UniProtKB-KW"/>
</dbReference>
<dbReference type="GO" id="GO:0044218">
    <property type="term" value="C:other organism cell membrane"/>
    <property type="evidence" value="ECO:0007669"/>
    <property type="project" value="UniProtKB-KW"/>
</dbReference>
<dbReference type="GO" id="GO:0042742">
    <property type="term" value="P:defense response to bacterium"/>
    <property type="evidence" value="ECO:0007669"/>
    <property type="project" value="UniProtKB-KW"/>
</dbReference>
<dbReference type="FunFam" id="3.10.450.10:FF:000034">
    <property type="entry name" value="Cathelicidin-related peptide Oh-Cath"/>
    <property type="match status" value="1"/>
</dbReference>
<dbReference type="Gene3D" id="3.10.450.10">
    <property type="match status" value="1"/>
</dbReference>
<dbReference type="InterPro" id="IPR001894">
    <property type="entry name" value="Cathelicidin-like"/>
</dbReference>
<dbReference type="InterPro" id="IPR046350">
    <property type="entry name" value="Cystatin_sf"/>
</dbReference>
<dbReference type="PANTHER" id="PTHR10206">
    <property type="entry name" value="CATHELICIDIN"/>
    <property type="match status" value="1"/>
</dbReference>
<dbReference type="PANTHER" id="PTHR10206:SF4">
    <property type="entry name" value="NEUTROPHILIC GRANULE PROTEIN"/>
    <property type="match status" value="1"/>
</dbReference>
<dbReference type="Pfam" id="PF00666">
    <property type="entry name" value="Cathelicidins"/>
    <property type="match status" value="1"/>
</dbReference>
<dbReference type="SUPFAM" id="SSF54403">
    <property type="entry name" value="Cystatin/monellin"/>
    <property type="match status" value="1"/>
</dbReference>
<evidence type="ECO:0000250" key="1"/>
<evidence type="ECO:0000250" key="2">
    <source>
        <dbReference type="UniProtKB" id="B6D434"/>
    </source>
</evidence>
<evidence type="ECO:0000255" key="3"/>
<evidence type="ECO:0000256" key="4">
    <source>
        <dbReference type="SAM" id="MobiDB-lite"/>
    </source>
</evidence>
<evidence type="ECO:0000269" key="5">
    <source>
    </source>
</evidence>
<evidence type="ECO:0000303" key="6">
    <source>
    </source>
</evidence>
<evidence type="ECO:0000303" key="7">
    <source>
    </source>
</evidence>
<evidence type="ECO:0000305" key="8"/>
<evidence type="ECO:0000305" key="9">
    <source>
    </source>
</evidence>
<evidence type="ECO:0000305" key="10">
    <source>
    </source>
</evidence>
<reference key="1">
    <citation type="journal article" date="2014" name="Amino Acids">
        <title>Vipericidins: a novel family of cathelicidin-related peptides from the venom gland of South American pit vipers.</title>
        <authorList>
            <person name="Falcao C.B."/>
            <person name="de La Torre B.G."/>
            <person name="Perez-Peinado C."/>
            <person name="Barron A.E."/>
            <person name="Andreu D."/>
            <person name="Radis-Baptista G."/>
        </authorList>
    </citation>
    <scope>NUCLEOTIDE SEQUENCE [MRNA]</scope>
    <scope>SYNTHESIS OF 156-189</scope>
    <scope>FUNCTION</scope>
    <source>
        <tissue>Venom gland</tissue>
    </source>
</reference>
<reference key="2">
    <citation type="journal article" date="2017" name="Toxicon">
        <title>Evaluation of the antichagasic activity of batroxicidin, a cathelicidin-related antimicrobial peptide found in Bothrops atrox venom gland.</title>
        <authorList>
            <person name="Mello C.P."/>
            <person name="Lima D.B."/>
            <person name="Menezes R.R."/>
            <person name="Bandeira I.C."/>
            <person name="Tessarolo L.D."/>
            <person name="Sampaio T.L."/>
            <person name="Falcao C.B."/>
            <person name="Radis-Baptista G."/>
            <person name="Martins A.M."/>
        </authorList>
    </citation>
    <scope>FUNCTION</scope>
    <scope>SYNTHESIS OF 156-189</scope>
    <scope>PHARMACEUTICAL</scope>
</reference>
<comment type="function">
    <text evidence="2 5">Potent antimicrobial peptide against Gram-negative (MIC=0.25 ug/ml against E.coli ATCC 25922, MIC=1 ug/ml against P.aeruginosa) and Gram-positive bacteria (MIC=32 ug/ml against E.faecalis, MIC=32 ug/ml against S.aureus) (PubMed:25100358). Adopts an amphipathic alpha helical conformation, that may allow to partition into the target membrane (By similarity). Low hemolytic activities have been observed on mammalian cells (PubMed:25100358). In addition, when tested in vitro on the parasite Trypanosoma cruzi (responsible of the Chagas disease), is able to reduce the number of the three forms (epimastigote, trypomastigote and amastigote) by inducing cell death through necrosis (PubMed:28246023).</text>
</comment>
<comment type="subcellular location">
    <subcellularLocation>
        <location evidence="2">Secreted</location>
    </subcellularLocation>
    <subcellularLocation>
        <location evidence="2">Target cell membrane</location>
    </subcellularLocation>
    <text evidence="2">Forms a helical membrane channel in the prey.</text>
</comment>
<comment type="tissue specificity">
    <text evidence="9">Expressed by the venom gland.</text>
</comment>
<comment type="pharmaceutical">
    <text evidence="10">Promising drug candidate or lead for the development of new drugs to treat Chagas disease (also called American Trypanosomiasis). Shows a high selectivity index (SI) of 315.5 to the trypomastigote forms.</text>
</comment>
<comment type="miscellaneous">
    <text evidence="9">The putative mature sequence has been predicted by AMPA, a predictive algorithm for identification of peptide stretches with antimicrobial properties.</text>
</comment>
<comment type="similarity">
    <text evidence="8">Belongs to the cathelicidin family.</text>
</comment>
<organism>
    <name type="scientific">Bothrops atrox</name>
    <name type="common">Barba amarilla</name>
    <name type="synonym">Fer-de-lance</name>
    <dbReference type="NCBI Taxonomy" id="8725"/>
    <lineage>
        <taxon>Eukaryota</taxon>
        <taxon>Metazoa</taxon>
        <taxon>Chordata</taxon>
        <taxon>Craniata</taxon>
        <taxon>Vertebrata</taxon>
        <taxon>Euteleostomi</taxon>
        <taxon>Lepidosauria</taxon>
        <taxon>Squamata</taxon>
        <taxon>Bifurcata</taxon>
        <taxon>Unidentata</taxon>
        <taxon>Episquamata</taxon>
        <taxon>Toxicofera</taxon>
        <taxon>Serpentes</taxon>
        <taxon>Colubroidea</taxon>
        <taxon>Viperidae</taxon>
        <taxon>Crotalinae</taxon>
        <taxon>Bothrops</taxon>
    </lineage>
</organism>